<sequence>MLQKLLEANNLKFEDKFYEDCEVFVKLLQQWGTIHNLSGRLTRDDIYENILDSLYPLTFIEKYESFADIGTGAGYPGLILAIALRDTKAYLIEPRIKRVSFLNFVKATLKLDNLVVLCNRVEEVKDLQVDLITSRAVTNTSLLLDITKNIKKPNSSYLFYKGSMLESELENAKVNNYKIVNKKDRNYLYIKGLI</sequence>
<gene>
    <name evidence="1" type="primary">rsmG</name>
    <name type="ordered locus">Abu_1236</name>
</gene>
<feature type="chain" id="PRO_1000075212" description="Ribosomal RNA small subunit methyltransferase G">
    <location>
        <begin position="1"/>
        <end position="194"/>
    </location>
</feature>
<feature type="binding site" evidence="1">
    <location>
        <position position="70"/>
    </location>
    <ligand>
        <name>S-adenosyl-L-methionine</name>
        <dbReference type="ChEBI" id="CHEBI:59789"/>
    </ligand>
</feature>
<feature type="binding site" evidence="1">
    <location>
        <position position="75"/>
    </location>
    <ligand>
        <name>S-adenosyl-L-methionine</name>
        <dbReference type="ChEBI" id="CHEBI:59789"/>
    </ligand>
</feature>
<feature type="binding site" evidence="1">
    <location>
        <begin position="121"/>
        <end position="122"/>
    </location>
    <ligand>
        <name>S-adenosyl-L-methionine</name>
        <dbReference type="ChEBI" id="CHEBI:59789"/>
    </ligand>
</feature>
<feature type="binding site" evidence="1">
    <location>
        <position position="135"/>
    </location>
    <ligand>
        <name>S-adenosyl-L-methionine</name>
        <dbReference type="ChEBI" id="CHEBI:59789"/>
    </ligand>
</feature>
<evidence type="ECO:0000255" key="1">
    <source>
        <dbReference type="HAMAP-Rule" id="MF_00074"/>
    </source>
</evidence>
<keyword id="KW-0963">Cytoplasm</keyword>
<keyword id="KW-0489">Methyltransferase</keyword>
<keyword id="KW-1185">Reference proteome</keyword>
<keyword id="KW-0698">rRNA processing</keyword>
<keyword id="KW-0949">S-adenosyl-L-methionine</keyword>
<keyword id="KW-0808">Transferase</keyword>
<accession>A8EU69</accession>
<organism>
    <name type="scientific">Aliarcobacter butzleri (strain RM4018)</name>
    <name type="common">Arcobacter butzleri</name>
    <dbReference type="NCBI Taxonomy" id="367737"/>
    <lineage>
        <taxon>Bacteria</taxon>
        <taxon>Pseudomonadati</taxon>
        <taxon>Campylobacterota</taxon>
        <taxon>Epsilonproteobacteria</taxon>
        <taxon>Campylobacterales</taxon>
        <taxon>Arcobacteraceae</taxon>
        <taxon>Aliarcobacter</taxon>
    </lineage>
</organism>
<protein>
    <recommendedName>
        <fullName evidence="1">Ribosomal RNA small subunit methyltransferase G</fullName>
        <ecNumber evidence="1">2.1.1.170</ecNumber>
    </recommendedName>
    <alternativeName>
        <fullName evidence="1">16S rRNA 7-methylguanosine methyltransferase</fullName>
        <shortName evidence="1">16S rRNA m7G methyltransferase</shortName>
    </alternativeName>
</protein>
<reference key="1">
    <citation type="journal article" date="2007" name="PLoS ONE">
        <title>The complete genome sequence and analysis of the Epsilonproteobacterium Arcobacter butzleri.</title>
        <authorList>
            <person name="Miller W.G."/>
            <person name="Parker C.T."/>
            <person name="Rubenfield M."/>
            <person name="Mendz G.L."/>
            <person name="Woesten M.M.S.M."/>
            <person name="Ussery D.W."/>
            <person name="Stolz J.F."/>
            <person name="Binnewies T.T."/>
            <person name="Hallin P.F."/>
            <person name="Wang G."/>
            <person name="Malek J.A."/>
            <person name="Rogosin A."/>
            <person name="Stanker L.H."/>
            <person name="Mandrell R.E."/>
        </authorList>
    </citation>
    <scope>NUCLEOTIDE SEQUENCE [LARGE SCALE GENOMIC DNA]</scope>
    <source>
        <strain>RM4018</strain>
    </source>
</reference>
<proteinExistence type="inferred from homology"/>
<comment type="function">
    <text evidence="1">Specifically methylates the N7 position of guanine in position 527 of 16S rRNA.</text>
</comment>
<comment type="catalytic activity">
    <reaction evidence="1">
        <text>guanosine(527) in 16S rRNA + S-adenosyl-L-methionine = N(7)-methylguanosine(527) in 16S rRNA + S-adenosyl-L-homocysteine</text>
        <dbReference type="Rhea" id="RHEA:42732"/>
        <dbReference type="Rhea" id="RHEA-COMP:10209"/>
        <dbReference type="Rhea" id="RHEA-COMP:10210"/>
        <dbReference type="ChEBI" id="CHEBI:57856"/>
        <dbReference type="ChEBI" id="CHEBI:59789"/>
        <dbReference type="ChEBI" id="CHEBI:74269"/>
        <dbReference type="ChEBI" id="CHEBI:74480"/>
        <dbReference type="EC" id="2.1.1.170"/>
    </reaction>
</comment>
<comment type="subcellular location">
    <subcellularLocation>
        <location evidence="1">Cytoplasm</location>
    </subcellularLocation>
</comment>
<comment type="similarity">
    <text evidence="1">Belongs to the methyltransferase superfamily. RNA methyltransferase RsmG family.</text>
</comment>
<name>RSMG_ALIB4</name>
<dbReference type="EC" id="2.1.1.170" evidence="1"/>
<dbReference type="EMBL" id="CP000361">
    <property type="protein sequence ID" value="ABV67493.1"/>
    <property type="molecule type" value="Genomic_DNA"/>
</dbReference>
<dbReference type="RefSeq" id="WP_012012915.1">
    <property type="nucleotide sequence ID" value="NC_009850.1"/>
</dbReference>
<dbReference type="SMR" id="A8EU69"/>
<dbReference type="STRING" id="367737.Abu_1236"/>
<dbReference type="GeneID" id="24305558"/>
<dbReference type="KEGG" id="abu:Abu_1236"/>
<dbReference type="eggNOG" id="COG0357">
    <property type="taxonomic scope" value="Bacteria"/>
</dbReference>
<dbReference type="HOGENOM" id="CLU_065341_2_1_7"/>
<dbReference type="Proteomes" id="UP000001136">
    <property type="component" value="Chromosome"/>
</dbReference>
<dbReference type="GO" id="GO:0005829">
    <property type="term" value="C:cytosol"/>
    <property type="evidence" value="ECO:0007669"/>
    <property type="project" value="TreeGrafter"/>
</dbReference>
<dbReference type="GO" id="GO:0070043">
    <property type="term" value="F:rRNA (guanine-N7-)-methyltransferase activity"/>
    <property type="evidence" value="ECO:0007669"/>
    <property type="project" value="UniProtKB-UniRule"/>
</dbReference>
<dbReference type="Gene3D" id="3.40.50.150">
    <property type="entry name" value="Vaccinia Virus protein VP39"/>
    <property type="match status" value="1"/>
</dbReference>
<dbReference type="HAMAP" id="MF_00074">
    <property type="entry name" value="16SrRNA_methyltr_G"/>
    <property type="match status" value="1"/>
</dbReference>
<dbReference type="InterPro" id="IPR003682">
    <property type="entry name" value="rRNA_ssu_MeTfrase_G"/>
</dbReference>
<dbReference type="InterPro" id="IPR029063">
    <property type="entry name" value="SAM-dependent_MTases_sf"/>
</dbReference>
<dbReference type="NCBIfam" id="TIGR00138">
    <property type="entry name" value="rsmG_gidB"/>
    <property type="match status" value="1"/>
</dbReference>
<dbReference type="PANTHER" id="PTHR31760">
    <property type="entry name" value="S-ADENOSYL-L-METHIONINE-DEPENDENT METHYLTRANSFERASES SUPERFAMILY PROTEIN"/>
    <property type="match status" value="1"/>
</dbReference>
<dbReference type="PANTHER" id="PTHR31760:SF0">
    <property type="entry name" value="S-ADENOSYL-L-METHIONINE-DEPENDENT METHYLTRANSFERASES SUPERFAMILY PROTEIN"/>
    <property type="match status" value="1"/>
</dbReference>
<dbReference type="Pfam" id="PF02527">
    <property type="entry name" value="GidB"/>
    <property type="match status" value="1"/>
</dbReference>
<dbReference type="PIRSF" id="PIRSF003078">
    <property type="entry name" value="GidB"/>
    <property type="match status" value="1"/>
</dbReference>
<dbReference type="SUPFAM" id="SSF53335">
    <property type="entry name" value="S-adenosyl-L-methionine-dependent methyltransferases"/>
    <property type="match status" value="1"/>
</dbReference>